<accession>Q9XHL5</accession>
<accession>Q6Z8N5</accession>
<sequence>MEVRRRAPLPPPPGRVQAGDALPLPIRHTNLIFSALFAASLAYLMRRWREKIRSSTPLHVVGLAEMLAIFGLVASLIYLLSFFGIAFVQSIVSSSDDEEEDFLVGPARGSSAAAAVAPPPPPSSPAQCSLLGSPHDDAARERMPEEDEEIVSSVVAGKVPSYVLETKLGDCRRAAGIRREAVRRITGRQIEGLPLDGFDYASILGQCCELPVGYVQLPVGIAGPLLLDGQRFYVPMATTEGCLVASTNRGCKAIAESGGAVSVVLRDGMTRAPVARLPTARRAAELKAFLEDSVNFNTLSMVFNRSSRFARLQGVQCAMAGRNLYMRFSCCTGDAMGMNMVSKGVQNVLDYLQDDFPDMDVISISGNFCSDKKPAAVNWIEGRGKSVVCEAVIKEDVVKKVLKTNVQSLVELNVIKNLAGSAVAGALGGFNAHASNIVTAIFIATGQDPAQNVESSHCITMLEAVNDGRDLHISVTMPSIEVGTVGGGTQLASQAACLDLLGVKGANRESPGSNARLLATVVAGGVLAGELSLLSALAAGQLVKSHMKYNRSSKDMSKVIS</sequence>
<reference key="1">
    <citation type="submission" date="1998-11" db="EMBL/GenBank/DDBJ databases">
        <title>Isolation and characterization of two differentially expressed hydroxy-methylglutaryl-CoA reductase genes from rice.</title>
        <authorList>
            <person name="Ha S.-H."/>
            <person name="Lee S.-W."/>
            <person name="Hwang Y.-S."/>
        </authorList>
    </citation>
    <scope>NUCLEOTIDE SEQUENCE [GENOMIC DNA]</scope>
</reference>
<reference key="2">
    <citation type="journal article" date="2005" name="Nature">
        <title>The map-based sequence of the rice genome.</title>
        <authorList>
            <consortium name="International rice genome sequencing project (IRGSP)"/>
        </authorList>
    </citation>
    <scope>NUCLEOTIDE SEQUENCE [LARGE SCALE GENOMIC DNA]</scope>
    <source>
        <strain>cv. Nipponbare</strain>
    </source>
</reference>
<reference key="3">
    <citation type="journal article" date="2013" name="Rice">
        <title>Improvement of the Oryza sativa Nipponbare reference genome using next generation sequence and optical map data.</title>
        <authorList>
            <person name="Kawahara Y."/>
            <person name="de la Bastide M."/>
            <person name="Hamilton J.P."/>
            <person name="Kanamori H."/>
            <person name="McCombie W.R."/>
            <person name="Ouyang S."/>
            <person name="Schwartz D.C."/>
            <person name="Tanaka T."/>
            <person name="Wu J."/>
            <person name="Zhou S."/>
            <person name="Childs K.L."/>
            <person name="Davidson R.M."/>
            <person name="Lin H."/>
            <person name="Quesada-Ocampo L."/>
            <person name="Vaillancourt B."/>
            <person name="Sakai H."/>
            <person name="Lee S.S."/>
            <person name="Kim J."/>
            <person name="Numa H."/>
            <person name="Itoh T."/>
            <person name="Buell C.R."/>
            <person name="Matsumoto T."/>
        </authorList>
    </citation>
    <scope>GENOME REANNOTATION</scope>
    <source>
        <strain>cv. Nipponbare</strain>
    </source>
</reference>
<reference key="4">
    <citation type="journal article" date="2003" name="Science">
        <title>Collection, mapping, and annotation of over 28,000 cDNA clones from japonica rice.</title>
        <authorList>
            <consortium name="The rice full-length cDNA consortium"/>
        </authorList>
    </citation>
    <scope>NUCLEOTIDE SEQUENCE [LARGE SCALE MRNA] OF 95-561</scope>
    <source>
        <strain>cv. Nipponbare</strain>
    </source>
</reference>
<gene>
    <name type="primary">HMG3</name>
    <name type="synonym">HMGR3</name>
    <name type="ordered locus">Os08g0512700</name>
    <name type="ordered locus">LOC_Os08g40180</name>
    <name type="ORF">P0711H09.15</name>
</gene>
<organism>
    <name type="scientific">Oryza sativa subsp. japonica</name>
    <name type="common">Rice</name>
    <dbReference type="NCBI Taxonomy" id="39947"/>
    <lineage>
        <taxon>Eukaryota</taxon>
        <taxon>Viridiplantae</taxon>
        <taxon>Streptophyta</taxon>
        <taxon>Embryophyta</taxon>
        <taxon>Tracheophyta</taxon>
        <taxon>Spermatophyta</taxon>
        <taxon>Magnoliopsida</taxon>
        <taxon>Liliopsida</taxon>
        <taxon>Poales</taxon>
        <taxon>Poaceae</taxon>
        <taxon>BOP clade</taxon>
        <taxon>Oryzoideae</taxon>
        <taxon>Oryzeae</taxon>
        <taxon>Oryzinae</taxon>
        <taxon>Oryza</taxon>
        <taxon>Oryza sativa</taxon>
    </lineage>
</organism>
<protein>
    <recommendedName>
        <fullName>3-hydroxy-3-methylglutaryl-coenzyme A reductase 3</fullName>
        <shortName>HMG-CoA reductase 3</shortName>
        <ecNumber>1.1.1.34</ecNumber>
    </recommendedName>
</protein>
<proteinExistence type="evidence at transcript level"/>
<comment type="function">
    <text>Catalyzes the synthesis of mevalonate. The specific precursor of all isoprenoid compounds present in plants.</text>
</comment>
<comment type="catalytic activity">
    <reaction evidence="3">
        <text>(R)-mevalonate + 2 NADP(+) + CoA = (3S)-3-hydroxy-3-methylglutaryl-CoA + 2 NADPH + 2 H(+)</text>
        <dbReference type="Rhea" id="RHEA:15989"/>
        <dbReference type="ChEBI" id="CHEBI:15378"/>
        <dbReference type="ChEBI" id="CHEBI:36464"/>
        <dbReference type="ChEBI" id="CHEBI:43074"/>
        <dbReference type="ChEBI" id="CHEBI:57287"/>
        <dbReference type="ChEBI" id="CHEBI:57783"/>
        <dbReference type="ChEBI" id="CHEBI:58349"/>
        <dbReference type="EC" id="1.1.1.34"/>
    </reaction>
</comment>
<comment type="pathway">
    <text>Metabolic intermediate biosynthesis; (R)-mevalonate biosynthesis; (R)-mevalonate from acetyl-CoA: step 3/3.</text>
</comment>
<comment type="subcellular location">
    <subcellularLocation>
        <location>Endoplasmic reticulum membrane</location>
        <topology>Multi-pass membrane protein</topology>
    </subcellularLocation>
</comment>
<comment type="similarity">
    <text evidence="5">Belongs to the HMG-CoA reductase family.</text>
</comment>
<evidence type="ECO:0000250" key="1"/>
<evidence type="ECO:0000255" key="2"/>
<evidence type="ECO:0000255" key="3">
    <source>
        <dbReference type="PROSITE-ProRule" id="PRU10003"/>
    </source>
</evidence>
<evidence type="ECO:0000256" key="4">
    <source>
        <dbReference type="SAM" id="MobiDB-lite"/>
    </source>
</evidence>
<evidence type="ECO:0000305" key="5"/>
<name>HMDH3_ORYSJ</name>
<keyword id="KW-0256">Endoplasmic reticulum</keyword>
<keyword id="KW-0325">Glycoprotein</keyword>
<keyword id="KW-0414">Isoprene biosynthesis</keyword>
<keyword id="KW-0472">Membrane</keyword>
<keyword id="KW-0521">NADP</keyword>
<keyword id="KW-0560">Oxidoreductase</keyword>
<keyword id="KW-1185">Reference proteome</keyword>
<keyword id="KW-0812">Transmembrane</keyword>
<keyword id="KW-1133">Transmembrane helix</keyword>
<feature type="chain" id="PRO_0000114447" description="3-hydroxy-3-methylglutaryl-coenzyme A reductase 3">
    <location>
        <begin position="1"/>
        <end position="561"/>
    </location>
</feature>
<feature type="transmembrane region" description="Helical" evidence="2">
    <location>
        <begin position="25"/>
        <end position="45"/>
    </location>
</feature>
<feature type="transmembrane region" description="Helical" evidence="2">
    <location>
        <begin position="69"/>
        <end position="89"/>
    </location>
</feature>
<feature type="region of interest" description="Linker" evidence="1">
    <location>
        <begin position="90"/>
        <end position="145"/>
    </location>
</feature>
<feature type="region of interest" description="Disordered" evidence="4">
    <location>
        <begin position="113"/>
        <end position="146"/>
    </location>
</feature>
<feature type="region of interest" description="Catalytic" evidence="1">
    <location>
        <begin position="146"/>
        <end position="561"/>
    </location>
</feature>
<feature type="compositionally biased region" description="Basic and acidic residues" evidence="4">
    <location>
        <begin position="134"/>
        <end position="143"/>
    </location>
</feature>
<feature type="active site" description="Charge relay system" evidence="1">
    <location>
        <position position="240"/>
    </location>
</feature>
<feature type="active site" description="Charge relay system" evidence="1">
    <location>
        <position position="372"/>
    </location>
</feature>
<feature type="active site" description="Charge relay system" evidence="1">
    <location>
        <position position="448"/>
    </location>
</feature>
<feature type="active site" description="Proton donor" evidence="3">
    <location>
        <position position="546"/>
    </location>
</feature>
<feature type="glycosylation site" description="N-linked (GlcNAc...) asparagine" evidence="2">
    <location>
        <position position="304"/>
    </location>
</feature>
<feature type="glycosylation site" description="N-linked (GlcNAc...) asparagine" evidence="2">
    <location>
        <position position="550"/>
    </location>
</feature>
<feature type="sequence conflict" description="In Ref. 1; AAD38873." evidence="5" ref="1">
    <original>PPP</original>
    <variation>RA</variation>
    <location>
        <begin position="119"/>
        <end position="121"/>
    </location>
</feature>
<feature type="sequence conflict" description="In Ref. 1; AAD38873." evidence="5" ref="1">
    <original>V</original>
    <variation>E</variation>
    <location>
        <position position="345"/>
    </location>
</feature>
<feature type="sequence conflict" description="In Ref. 1; AAD38873." evidence="5" ref="1">
    <original>A</original>
    <variation>R</variation>
    <location>
        <position position="538"/>
    </location>
</feature>
<dbReference type="EC" id="1.1.1.34"/>
<dbReference type="EMBL" id="AF110382">
    <property type="protein sequence ID" value="AAD38873.1"/>
    <property type="molecule type" value="Genomic_DNA"/>
</dbReference>
<dbReference type="EMBL" id="AP004765">
    <property type="protein sequence ID" value="BAD10066.1"/>
    <property type="molecule type" value="Genomic_DNA"/>
</dbReference>
<dbReference type="EMBL" id="AP014964">
    <property type="status" value="NOT_ANNOTATED_CDS"/>
    <property type="molecule type" value="Genomic_DNA"/>
</dbReference>
<dbReference type="EMBL" id="AK060545">
    <property type="status" value="NOT_ANNOTATED_CDS"/>
    <property type="molecule type" value="mRNA"/>
</dbReference>
<dbReference type="RefSeq" id="XP_015648250.1">
    <property type="nucleotide sequence ID" value="XM_015792764.1"/>
</dbReference>
<dbReference type="SMR" id="Q9XHL5"/>
<dbReference type="FunCoup" id="Q9XHL5">
    <property type="interactions" value="28"/>
</dbReference>
<dbReference type="STRING" id="39947.Q9XHL5"/>
<dbReference type="GlyCosmos" id="Q9XHL5">
    <property type="glycosylation" value="2 sites, No reported glycans"/>
</dbReference>
<dbReference type="PaxDb" id="39947-Q9XHL5"/>
<dbReference type="eggNOG" id="KOG2480">
    <property type="taxonomic scope" value="Eukaryota"/>
</dbReference>
<dbReference type="HOGENOM" id="CLU_001734_2_0_1"/>
<dbReference type="InParanoid" id="Q9XHL5"/>
<dbReference type="OrthoDB" id="310654at2759"/>
<dbReference type="PlantReactome" id="R-OSA-1119615">
    <property type="pathway name" value="Mevalonate pathway"/>
</dbReference>
<dbReference type="UniPathway" id="UPA00058">
    <property type="reaction ID" value="UER00103"/>
</dbReference>
<dbReference type="Proteomes" id="UP000000763">
    <property type="component" value="Chromosome 8"/>
</dbReference>
<dbReference type="Proteomes" id="UP000059680">
    <property type="component" value="Chromosome 8"/>
</dbReference>
<dbReference type="GO" id="GO:0005789">
    <property type="term" value="C:endoplasmic reticulum membrane"/>
    <property type="evidence" value="ECO:0000318"/>
    <property type="project" value="GO_Central"/>
</dbReference>
<dbReference type="GO" id="GO:0005778">
    <property type="term" value="C:peroxisomal membrane"/>
    <property type="evidence" value="ECO:0000318"/>
    <property type="project" value="GO_Central"/>
</dbReference>
<dbReference type="GO" id="GO:0004420">
    <property type="term" value="F:hydroxymethylglutaryl-CoA reductase (NADPH) activity"/>
    <property type="evidence" value="ECO:0000318"/>
    <property type="project" value="GO_Central"/>
</dbReference>
<dbReference type="GO" id="GO:0015936">
    <property type="term" value="P:coenzyme A metabolic process"/>
    <property type="evidence" value="ECO:0007669"/>
    <property type="project" value="InterPro"/>
</dbReference>
<dbReference type="GO" id="GO:0008299">
    <property type="term" value="P:isoprenoid biosynthetic process"/>
    <property type="evidence" value="ECO:0000318"/>
    <property type="project" value="GO_Central"/>
</dbReference>
<dbReference type="GO" id="GO:0016126">
    <property type="term" value="P:sterol biosynthetic process"/>
    <property type="evidence" value="ECO:0000318"/>
    <property type="project" value="GO_Central"/>
</dbReference>
<dbReference type="CDD" id="cd00643">
    <property type="entry name" value="HMG-CoA_reductase_classI"/>
    <property type="match status" value="1"/>
</dbReference>
<dbReference type="FunFam" id="1.10.3270.10:FF:000002">
    <property type="entry name" value="3-hydroxy-3-methylglutaryl coenzyme A reductase"/>
    <property type="match status" value="1"/>
</dbReference>
<dbReference type="FunFam" id="3.30.70.420:FF:000001">
    <property type="entry name" value="3-hydroxy-3-methylglutaryl coenzyme A reductase"/>
    <property type="match status" value="1"/>
</dbReference>
<dbReference type="FunFam" id="3.90.770.10:FF:000001">
    <property type="entry name" value="3-hydroxy-3-methylglutaryl coenzyme A reductase"/>
    <property type="match status" value="1"/>
</dbReference>
<dbReference type="Gene3D" id="3.90.770.10">
    <property type="entry name" value="3-hydroxy-3-methylglutaryl-coenzyme A Reductase, Chain A, domain 2"/>
    <property type="match status" value="1"/>
</dbReference>
<dbReference type="Gene3D" id="1.10.3270.10">
    <property type="entry name" value="HMGR, N-terminal domain"/>
    <property type="match status" value="1"/>
</dbReference>
<dbReference type="Gene3D" id="3.30.70.420">
    <property type="entry name" value="Hydroxymethylglutaryl-CoA reductase, class I/II, NAD/NADP-binding domain"/>
    <property type="match status" value="1"/>
</dbReference>
<dbReference type="InterPro" id="IPR002202">
    <property type="entry name" value="HMG_CoA_Rdtase"/>
</dbReference>
<dbReference type="InterPro" id="IPR023074">
    <property type="entry name" value="HMG_CoA_Rdtase_cat_sf"/>
</dbReference>
<dbReference type="InterPro" id="IPR023076">
    <property type="entry name" value="HMG_CoA_Rdtase_CS"/>
</dbReference>
<dbReference type="InterPro" id="IPR004554">
    <property type="entry name" value="HMG_CoA_Rdtase_eu_arc"/>
</dbReference>
<dbReference type="InterPro" id="IPR023282">
    <property type="entry name" value="HMG_CoA_Rdtase_N"/>
</dbReference>
<dbReference type="InterPro" id="IPR009023">
    <property type="entry name" value="HMG_CoA_Rdtase_NAD(P)-bd_sf"/>
</dbReference>
<dbReference type="InterPro" id="IPR009029">
    <property type="entry name" value="HMG_CoA_Rdtase_sub-bd_dom_sf"/>
</dbReference>
<dbReference type="NCBIfam" id="TIGR00533">
    <property type="entry name" value="HMG_CoA_R_NADP"/>
    <property type="match status" value="1"/>
</dbReference>
<dbReference type="PANTHER" id="PTHR10572">
    <property type="entry name" value="3-HYDROXY-3-METHYLGLUTARYL-COENZYME A REDUCTASE"/>
    <property type="match status" value="1"/>
</dbReference>
<dbReference type="PANTHER" id="PTHR10572:SF24">
    <property type="entry name" value="3-HYDROXY-3-METHYLGLUTARYL-COENZYME A REDUCTASE"/>
    <property type="match status" value="1"/>
</dbReference>
<dbReference type="Pfam" id="PF00368">
    <property type="entry name" value="HMG-CoA_red"/>
    <property type="match status" value="1"/>
</dbReference>
<dbReference type="PRINTS" id="PR00071">
    <property type="entry name" value="HMGCOARDTASE"/>
</dbReference>
<dbReference type="SUPFAM" id="SSF55035">
    <property type="entry name" value="NAD-binding domain of HMG-CoA reductase"/>
    <property type="match status" value="1"/>
</dbReference>
<dbReference type="SUPFAM" id="SSF56542">
    <property type="entry name" value="Substrate-binding domain of HMG-CoA reductase"/>
    <property type="match status" value="1"/>
</dbReference>
<dbReference type="PROSITE" id="PS00066">
    <property type="entry name" value="HMG_COA_REDUCTASE_1"/>
    <property type="match status" value="1"/>
</dbReference>
<dbReference type="PROSITE" id="PS00318">
    <property type="entry name" value="HMG_COA_REDUCTASE_2"/>
    <property type="match status" value="1"/>
</dbReference>
<dbReference type="PROSITE" id="PS01192">
    <property type="entry name" value="HMG_COA_REDUCTASE_3"/>
    <property type="match status" value="1"/>
</dbReference>
<dbReference type="PROSITE" id="PS50065">
    <property type="entry name" value="HMG_COA_REDUCTASE_4"/>
    <property type="match status" value="1"/>
</dbReference>